<sequence>MSLNMFWFLPTHGDGHYLGTEEGSRPVDHGYLQQIAQAADRLGYTGVLIPTGRSCEDAWLVAASMIPVTQRLKFLVALRPSVTSPTVAARQAATLDRLSNGRALFNLVTGSDPQELAGDGVFLDHSERYEASAEFTQVWRRLLLGETVNFNGKHIHVRGAKLLFPPIQQPYPPLYFGGSSDVAQELAAEQVDLYLTWGEPPELVKEKIEHVRAKAAAHGRKIRFGIRLHVIVRETNDEAWQAAERLISHLDDETIAKAQAAFARTDSVGQQRMAALHNGKRDNLEISPNLWAGVGLVRGGAGTALVGDGPTVAARINEYAALGIDSFVLSGYPHLEEAYRVGELLFPHLDVAIPEIPQPQPLNPQGEAVANDFIPRKVAQS</sequence>
<gene>
    <name evidence="1" type="primary">ssuD</name>
    <name type="ordered locus">E2348C_0928</name>
</gene>
<feature type="chain" id="PRO_1000164967" description="Alkanesulfonate monooxygenase">
    <location>
        <begin position="1"/>
        <end position="381"/>
    </location>
</feature>
<keyword id="KW-0285">Flavoprotein</keyword>
<keyword id="KW-0288">FMN</keyword>
<keyword id="KW-0503">Monooxygenase</keyword>
<keyword id="KW-0560">Oxidoreductase</keyword>
<keyword id="KW-1185">Reference proteome</keyword>
<name>SSUD_ECO27</name>
<organism>
    <name type="scientific">Escherichia coli O127:H6 (strain E2348/69 / EPEC)</name>
    <dbReference type="NCBI Taxonomy" id="574521"/>
    <lineage>
        <taxon>Bacteria</taxon>
        <taxon>Pseudomonadati</taxon>
        <taxon>Pseudomonadota</taxon>
        <taxon>Gammaproteobacteria</taxon>
        <taxon>Enterobacterales</taxon>
        <taxon>Enterobacteriaceae</taxon>
        <taxon>Escherichia</taxon>
    </lineage>
</organism>
<protein>
    <recommendedName>
        <fullName evidence="1">Alkanesulfonate monooxygenase</fullName>
        <ecNumber evidence="1">1.14.14.5</ecNumber>
    </recommendedName>
    <alternativeName>
        <fullName evidence="1">FMNH2-dependent aliphatic sulfonate monooxygenase</fullName>
    </alternativeName>
</protein>
<dbReference type="EC" id="1.14.14.5" evidence="1"/>
<dbReference type="EMBL" id="FM180568">
    <property type="protein sequence ID" value="CAS08476.1"/>
    <property type="molecule type" value="Genomic_DNA"/>
</dbReference>
<dbReference type="RefSeq" id="WP_000055990.1">
    <property type="nucleotide sequence ID" value="NC_011601.1"/>
</dbReference>
<dbReference type="SMR" id="B7UN21"/>
<dbReference type="KEGG" id="ecg:E2348C_0928"/>
<dbReference type="HOGENOM" id="CLU_027853_1_0_6"/>
<dbReference type="Proteomes" id="UP000008205">
    <property type="component" value="Chromosome"/>
</dbReference>
<dbReference type="GO" id="GO:0008726">
    <property type="term" value="F:alkanesulfonate monooxygenase activity"/>
    <property type="evidence" value="ECO:0007669"/>
    <property type="project" value="UniProtKB-UniRule"/>
</dbReference>
<dbReference type="GO" id="GO:0046306">
    <property type="term" value="P:alkanesulfonate catabolic process"/>
    <property type="evidence" value="ECO:0007669"/>
    <property type="project" value="TreeGrafter"/>
</dbReference>
<dbReference type="CDD" id="cd01094">
    <property type="entry name" value="Alkanesulfonate_monoxygenase"/>
    <property type="match status" value="1"/>
</dbReference>
<dbReference type="FunFam" id="3.20.20.30:FF:000001">
    <property type="entry name" value="Alkanesulfonate monooxygenase"/>
    <property type="match status" value="1"/>
</dbReference>
<dbReference type="Gene3D" id="3.20.20.30">
    <property type="entry name" value="Luciferase-like domain"/>
    <property type="match status" value="1"/>
</dbReference>
<dbReference type="HAMAP" id="MF_01229">
    <property type="entry name" value="Alkanesulf_monooxygen"/>
    <property type="match status" value="1"/>
</dbReference>
<dbReference type="InterPro" id="IPR019911">
    <property type="entry name" value="Alkanesulphonate_mOase_FMN-dep"/>
</dbReference>
<dbReference type="InterPro" id="IPR011251">
    <property type="entry name" value="Luciferase-like_dom"/>
</dbReference>
<dbReference type="InterPro" id="IPR036661">
    <property type="entry name" value="Luciferase-like_sf"/>
</dbReference>
<dbReference type="InterPro" id="IPR050172">
    <property type="entry name" value="SsuD_RutA_monooxygenase"/>
</dbReference>
<dbReference type="NCBIfam" id="TIGR03565">
    <property type="entry name" value="alk_sulf_monoox"/>
    <property type="match status" value="1"/>
</dbReference>
<dbReference type="NCBIfam" id="NF001939">
    <property type="entry name" value="PRK00719.1"/>
    <property type="match status" value="1"/>
</dbReference>
<dbReference type="PANTHER" id="PTHR42847">
    <property type="entry name" value="ALKANESULFONATE MONOOXYGENASE"/>
    <property type="match status" value="1"/>
</dbReference>
<dbReference type="PANTHER" id="PTHR42847:SF4">
    <property type="entry name" value="ALKANESULFONATE MONOOXYGENASE-RELATED"/>
    <property type="match status" value="1"/>
</dbReference>
<dbReference type="Pfam" id="PF00296">
    <property type="entry name" value="Bac_luciferase"/>
    <property type="match status" value="1"/>
</dbReference>
<dbReference type="SUPFAM" id="SSF51679">
    <property type="entry name" value="Bacterial luciferase-like"/>
    <property type="match status" value="1"/>
</dbReference>
<accession>B7UN21</accession>
<evidence type="ECO:0000255" key="1">
    <source>
        <dbReference type="HAMAP-Rule" id="MF_01229"/>
    </source>
</evidence>
<reference key="1">
    <citation type="journal article" date="2009" name="J. Bacteriol.">
        <title>Complete genome sequence and comparative genome analysis of enteropathogenic Escherichia coli O127:H6 strain E2348/69.</title>
        <authorList>
            <person name="Iguchi A."/>
            <person name="Thomson N.R."/>
            <person name="Ogura Y."/>
            <person name="Saunders D."/>
            <person name="Ooka T."/>
            <person name="Henderson I.R."/>
            <person name="Harris D."/>
            <person name="Asadulghani M."/>
            <person name="Kurokawa K."/>
            <person name="Dean P."/>
            <person name="Kenny B."/>
            <person name="Quail M.A."/>
            <person name="Thurston S."/>
            <person name="Dougan G."/>
            <person name="Hayashi T."/>
            <person name="Parkhill J."/>
            <person name="Frankel G."/>
        </authorList>
    </citation>
    <scope>NUCLEOTIDE SEQUENCE [LARGE SCALE GENOMIC DNA]</scope>
    <source>
        <strain>E2348/69 / EPEC</strain>
    </source>
</reference>
<comment type="function">
    <text evidence="1">Catalyzes the desulfonation of aliphatic sulfonates.</text>
</comment>
<comment type="catalytic activity">
    <reaction evidence="1">
        <text>an alkanesulfonate + FMNH2 + O2 = an aldehyde + FMN + sulfite + H2O + 2 H(+)</text>
        <dbReference type="Rhea" id="RHEA:23064"/>
        <dbReference type="ChEBI" id="CHEBI:15377"/>
        <dbReference type="ChEBI" id="CHEBI:15378"/>
        <dbReference type="ChEBI" id="CHEBI:15379"/>
        <dbReference type="ChEBI" id="CHEBI:17359"/>
        <dbReference type="ChEBI" id="CHEBI:17478"/>
        <dbReference type="ChEBI" id="CHEBI:57618"/>
        <dbReference type="ChEBI" id="CHEBI:58210"/>
        <dbReference type="ChEBI" id="CHEBI:134249"/>
        <dbReference type="EC" id="1.14.14.5"/>
    </reaction>
</comment>
<comment type="subunit">
    <text evidence="1">Homotetramer.</text>
</comment>
<comment type="miscellaneous">
    <text evidence="1">FMNH(2) which is absolutely required for this enzymatic reaction, is provided by SsuE.</text>
</comment>
<comment type="similarity">
    <text evidence="1">Belongs to the SsuD family.</text>
</comment>
<proteinExistence type="inferred from homology"/>